<keyword id="KW-0227">DNA damage</keyword>
<keyword id="KW-0234">DNA repair</keyword>
<keyword id="KW-0238">DNA-binding</keyword>
<keyword id="KW-0378">Hydrolase</keyword>
<keyword id="KW-0479">Metal-binding</keyword>
<keyword id="KW-0539">Nucleus</keyword>
<keyword id="KW-1185">Reference proteome</keyword>
<keyword id="KW-0862">Zinc</keyword>
<keyword id="KW-0863">Zinc-finger</keyword>
<proteinExistence type="evidence at transcript level"/>
<comment type="function">
    <text evidence="2 3">DNA-binding protein involved in single-strand DNA break repair, double-strand DNA break repair and base excision repair. Resolves abortive DNA ligation intermediates formed either at base excision sites, or when DNA ligases attempt to repair non-ligatable breaks induced by reactive oxygen species. Catalyzes the release of adenylate groups covalently linked to 5'-phosphate termini, resulting in the production of 5'-phosphate termini that can be efficiently rejoined. Also able to hydrolyze adenosine 5'-monophosphoramidate (AMP-NH(2)) and diadenosine tetraphosphate (AppppA), but with lower catalytic activity (By similarity). Likewise, catalyzes the release of 3'-linked guanosine (DNAppG) and inosine (DNAppI) from DNA, but has higher specific activity with 5'-linked adenosine (AppDNA) (By similarity).</text>
</comment>
<comment type="catalytic activity">
    <reaction evidence="3">
        <text>a 5'-end adenosine-5'-diphospho-5'-2'-deoxyribonucleoside-DNA + H2O = a 5'-end 5'-phospho-2'-deoxyribonucleoside-DNA + AMP + 2 H(+)</text>
        <dbReference type="Rhea" id="RHEA:52128"/>
        <dbReference type="Rhea" id="RHEA-COMP:13180"/>
        <dbReference type="Rhea" id="RHEA-COMP:13181"/>
        <dbReference type="ChEBI" id="CHEBI:15377"/>
        <dbReference type="ChEBI" id="CHEBI:15378"/>
        <dbReference type="ChEBI" id="CHEBI:136412"/>
        <dbReference type="ChEBI" id="CHEBI:136413"/>
        <dbReference type="ChEBI" id="CHEBI:456215"/>
        <dbReference type="EC" id="3.6.1.71"/>
    </reaction>
</comment>
<comment type="catalytic activity">
    <reaction evidence="3">
        <text>a 5'-end adenosine-5'-diphospho-5'-ribonucleoside-2'-deoxyribonucleotide-DNA + H2O = a 5'-end 5'-phospho-ribonucleoside-2'-deoxyribonucleotide-DNA + AMP + 2 H(+)</text>
        <dbReference type="Rhea" id="RHEA:52132"/>
        <dbReference type="Rhea" id="RHEA-COMP:13182"/>
        <dbReference type="Rhea" id="RHEA-COMP:13183"/>
        <dbReference type="ChEBI" id="CHEBI:15377"/>
        <dbReference type="ChEBI" id="CHEBI:15378"/>
        <dbReference type="ChEBI" id="CHEBI:136414"/>
        <dbReference type="ChEBI" id="CHEBI:136415"/>
        <dbReference type="ChEBI" id="CHEBI:456215"/>
        <dbReference type="EC" id="3.6.1.71"/>
    </reaction>
</comment>
<comment type="catalytic activity">
    <reaction evidence="2">
        <text>a 3'-end 2'-deoxyribonucleotide-3'-diphospho-5'-guanosine-DNA + H2O = a 3'-end 2'-deoxyribonucleotide 3'-phosphate-DNA + GMP + 2 H(+)</text>
        <dbReference type="Rhea" id="RHEA:52140"/>
        <dbReference type="Rhea" id="RHEA-COMP:13186"/>
        <dbReference type="Rhea" id="RHEA-COMP:13187"/>
        <dbReference type="ChEBI" id="CHEBI:15377"/>
        <dbReference type="ChEBI" id="CHEBI:15378"/>
        <dbReference type="ChEBI" id="CHEBI:58115"/>
        <dbReference type="ChEBI" id="CHEBI:136419"/>
        <dbReference type="ChEBI" id="CHEBI:136420"/>
        <dbReference type="EC" id="3.6.1.72"/>
    </reaction>
</comment>
<comment type="subcellular location">
    <subcellularLocation>
        <location evidence="3">Nucleus</location>
        <location evidence="3">Nucleoplasm</location>
    </subcellularLocation>
    <subcellularLocation>
        <location evidence="3">Nucleus</location>
        <location evidence="3">Nucleolus</location>
    </subcellularLocation>
</comment>
<comment type="domain">
    <text evidence="3">The histidine triad, also called HIT motif, forms part of the binding loop for the alpha-phosphate of purine mononucleotide.</text>
</comment>
<comment type="domain">
    <text evidence="1">The HIT domain is required for enzymatic activity.</text>
</comment>
<comment type="domain">
    <text evidence="1">The C2H2-type zinc finger mediates DNA-binding.</text>
</comment>
<gene>
    <name type="primary">APTX</name>
</gene>
<accession>P61802</accession>
<evidence type="ECO:0000250" key="1"/>
<evidence type="ECO:0000250" key="2">
    <source>
        <dbReference type="UniProtKB" id="O74859"/>
    </source>
</evidence>
<evidence type="ECO:0000250" key="3">
    <source>
        <dbReference type="UniProtKB" id="Q7Z2E3"/>
    </source>
</evidence>
<evidence type="ECO:0000255" key="4">
    <source>
        <dbReference type="PROSITE-ProRule" id="PRU00464"/>
    </source>
</evidence>
<evidence type="ECO:0000256" key="5">
    <source>
        <dbReference type="SAM" id="MobiDB-lite"/>
    </source>
</evidence>
<organism>
    <name type="scientific">Ciona intestinalis</name>
    <name type="common">Transparent sea squirt</name>
    <name type="synonym">Ascidia intestinalis</name>
    <dbReference type="NCBI Taxonomy" id="7719"/>
    <lineage>
        <taxon>Eukaryota</taxon>
        <taxon>Metazoa</taxon>
        <taxon>Chordata</taxon>
        <taxon>Tunicata</taxon>
        <taxon>Ascidiacea</taxon>
        <taxon>Phlebobranchia</taxon>
        <taxon>Cionidae</taxon>
        <taxon>Ciona</taxon>
    </lineage>
</organism>
<reference key="1">
    <citation type="submission" date="2002-12" db="EMBL/GenBank/DDBJ databases">
        <title>Identification of human FHA-HIT gene homolog in sea squirt.</title>
        <authorList>
            <person name="Chen Y."/>
            <person name="Huang C.-H."/>
        </authorList>
    </citation>
    <scope>NUCLEOTIDE SEQUENCE [MRNA]</scope>
</reference>
<protein>
    <recommendedName>
        <fullName>Aprataxin</fullName>
        <ecNumber evidence="3">3.6.1.71</ecNumber>
        <ecNumber evidence="2">3.6.1.72</ecNumber>
    </recommendedName>
    <alternativeName>
        <fullName>Forkhead-associated domain histidine triad-like protein</fullName>
        <shortName>FHA-HIT</shortName>
    </alternativeName>
</protein>
<feature type="chain" id="PRO_0000109848" description="Aprataxin">
    <location>
        <begin position="1"/>
        <end position="380"/>
    </location>
</feature>
<feature type="domain" description="FHA-like">
    <location>
        <begin position="36"/>
        <end position="85"/>
    </location>
</feature>
<feature type="domain" description="HIT" evidence="4">
    <location>
        <begin position="206"/>
        <end position="312"/>
    </location>
</feature>
<feature type="zinc finger region" description="C2H2-type; atypical">
    <location>
        <begin position="356"/>
        <end position="378"/>
    </location>
</feature>
<feature type="region of interest" description="Disordered" evidence="5">
    <location>
        <begin position="176"/>
        <end position="207"/>
    </location>
</feature>
<feature type="region of interest" description="Interaction with DNA substrate" evidence="3">
    <location>
        <begin position="231"/>
        <end position="235"/>
    </location>
</feature>
<feature type="region of interest" description="Interaction with DNA substrate" evidence="3">
    <location>
        <begin position="294"/>
        <end position="295"/>
    </location>
</feature>
<feature type="short sequence motif" description="Histidine triad motif" evidence="4">
    <location>
        <begin position="297"/>
        <end position="301"/>
    </location>
</feature>
<feature type="compositionally biased region" description="Basic and acidic residues" evidence="5">
    <location>
        <begin position="188"/>
        <end position="197"/>
    </location>
</feature>
<feature type="active site" description="Tele-AMP-histidine intermediate" evidence="3">
    <location>
        <position position="299"/>
    </location>
</feature>
<feature type="site" description="Interaction with DNA substrate" evidence="3">
    <location>
        <position position="212"/>
    </location>
</feature>
<feature type="site" description="Interaction with DNA substrate" evidence="3">
    <location>
        <position position="290"/>
    </location>
</feature>
<feature type="site" description="Interaction with DNA substrate" evidence="3">
    <location>
        <position position="301"/>
    </location>
</feature>
<feature type="site" description="Interaction with DNA substrate" evidence="3">
    <location>
        <position position="316"/>
    </location>
</feature>
<dbReference type="EC" id="3.6.1.71" evidence="3"/>
<dbReference type="EC" id="3.6.1.72" evidence="2"/>
<dbReference type="EMBL" id="AY208848">
    <property type="protein sequence ID" value="AAP86338.1"/>
    <property type="molecule type" value="mRNA"/>
</dbReference>
<dbReference type="RefSeq" id="NP_001027704.1">
    <property type="nucleotide sequence ID" value="NM_001032532.1"/>
</dbReference>
<dbReference type="SMR" id="P61802"/>
<dbReference type="FunCoup" id="P61802">
    <property type="interactions" value="8"/>
</dbReference>
<dbReference type="STRING" id="7719.ENSCINP00000017819"/>
<dbReference type="GeneID" id="445730"/>
<dbReference type="KEGG" id="cin:445730"/>
<dbReference type="CTD" id="54840"/>
<dbReference type="eggNOG" id="KOG0562">
    <property type="taxonomic scope" value="Eukaryota"/>
</dbReference>
<dbReference type="eggNOG" id="KOG2134">
    <property type="taxonomic scope" value="Eukaryota"/>
</dbReference>
<dbReference type="InParanoid" id="P61802"/>
<dbReference type="OrthoDB" id="3512845at2759"/>
<dbReference type="Proteomes" id="UP000008144">
    <property type="component" value="Unplaced"/>
</dbReference>
<dbReference type="GO" id="GO:0005730">
    <property type="term" value="C:nucleolus"/>
    <property type="evidence" value="ECO:0007669"/>
    <property type="project" value="UniProtKB-SubCell"/>
</dbReference>
<dbReference type="GO" id="GO:0005654">
    <property type="term" value="C:nucleoplasm"/>
    <property type="evidence" value="ECO:0007669"/>
    <property type="project" value="UniProtKB-SubCell"/>
</dbReference>
<dbReference type="GO" id="GO:0005634">
    <property type="term" value="C:nucleus"/>
    <property type="evidence" value="ECO:0000318"/>
    <property type="project" value="GO_Central"/>
</dbReference>
<dbReference type="GO" id="GO:0033699">
    <property type="term" value="F:DNA 5'-adenosine monophosphate hydrolase activity"/>
    <property type="evidence" value="ECO:0000318"/>
    <property type="project" value="GO_Central"/>
</dbReference>
<dbReference type="GO" id="GO:0120108">
    <property type="term" value="F:DNA-3'-diphospho-5'-guanosine diphosphatase"/>
    <property type="evidence" value="ECO:0007669"/>
    <property type="project" value="UniProtKB-EC"/>
</dbReference>
<dbReference type="GO" id="GO:0003725">
    <property type="term" value="F:double-stranded RNA binding"/>
    <property type="evidence" value="ECO:0000318"/>
    <property type="project" value="GO_Central"/>
</dbReference>
<dbReference type="GO" id="GO:0030983">
    <property type="term" value="F:mismatched DNA binding"/>
    <property type="evidence" value="ECO:0000318"/>
    <property type="project" value="GO_Central"/>
</dbReference>
<dbReference type="GO" id="GO:1990165">
    <property type="term" value="F:single-strand break-containing DNA binding"/>
    <property type="evidence" value="ECO:0000318"/>
    <property type="project" value="GO_Central"/>
</dbReference>
<dbReference type="GO" id="GO:0003697">
    <property type="term" value="F:single-stranded DNA binding"/>
    <property type="evidence" value="ECO:0000318"/>
    <property type="project" value="GO_Central"/>
</dbReference>
<dbReference type="GO" id="GO:0008270">
    <property type="term" value="F:zinc ion binding"/>
    <property type="evidence" value="ECO:0007669"/>
    <property type="project" value="UniProtKB-KW"/>
</dbReference>
<dbReference type="GO" id="GO:0000012">
    <property type="term" value="P:single strand break repair"/>
    <property type="evidence" value="ECO:0000318"/>
    <property type="project" value="GO_Central"/>
</dbReference>
<dbReference type="CDD" id="cd22716">
    <property type="entry name" value="FHA_APTX_PNKP"/>
    <property type="match status" value="1"/>
</dbReference>
<dbReference type="FunFam" id="3.30.428.10:FF:000004">
    <property type="entry name" value="aprataxin isoform X2"/>
    <property type="match status" value="1"/>
</dbReference>
<dbReference type="FunFam" id="2.60.200.20:FF:000058">
    <property type="entry name" value="GM26347"/>
    <property type="match status" value="1"/>
</dbReference>
<dbReference type="Gene3D" id="2.60.200.20">
    <property type="match status" value="1"/>
</dbReference>
<dbReference type="Gene3D" id="3.30.428.10">
    <property type="entry name" value="HIT-like"/>
    <property type="match status" value="1"/>
</dbReference>
<dbReference type="InterPro" id="IPR041388">
    <property type="entry name" value="FHA_2"/>
</dbReference>
<dbReference type="InterPro" id="IPR019808">
    <property type="entry name" value="Histidine_triad_CS"/>
</dbReference>
<dbReference type="InterPro" id="IPR011146">
    <property type="entry name" value="HIT-like"/>
</dbReference>
<dbReference type="InterPro" id="IPR036265">
    <property type="entry name" value="HIT-like_sf"/>
</dbReference>
<dbReference type="InterPro" id="IPR008984">
    <property type="entry name" value="SMAD_FHA_dom_sf"/>
</dbReference>
<dbReference type="InterPro" id="IPR032566">
    <property type="entry name" value="Znf-C2HE"/>
</dbReference>
<dbReference type="PANTHER" id="PTHR12486:SF4">
    <property type="entry name" value="APRATAXIN"/>
    <property type="match status" value="1"/>
</dbReference>
<dbReference type="PANTHER" id="PTHR12486">
    <property type="entry name" value="APRATAXIN-RELATED"/>
    <property type="match status" value="1"/>
</dbReference>
<dbReference type="Pfam" id="PF11969">
    <property type="entry name" value="DcpS_C"/>
    <property type="match status" value="1"/>
</dbReference>
<dbReference type="Pfam" id="PF17913">
    <property type="entry name" value="FHA_2"/>
    <property type="match status" value="1"/>
</dbReference>
<dbReference type="Pfam" id="PF16278">
    <property type="entry name" value="zf-C2HE"/>
    <property type="match status" value="1"/>
</dbReference>
<dbReference type="SUPFAM" id="SSF54197">
    <property type="entry name" value="HIT-like"/>
    <property type="match status" value="1"/>
</dbReference>
<dbReference type="SUPFAM" id="SSF49879">
    <property type="entry name" value="SMAD/FHA domain"/>
    <property type="match status" value="1"/>
</dbReference>
<dbReference type="PROSITE" id="PS00892">
    <property type="entry name" value="HIT_1"/>
    <property type="match status" value="1"/>
</dbReference>
<dbReference type="PROSITE" id="PS51084">
    <property type="entry name" value="HIT_2"/>
    <property type="match status" value="1"/>
</dbReference>
<name>APTX_CIOIN</name>
<sequence length="380" mass="43441">MRILYRLLKMADDTVKCYLECCKSSHPKLPLPHNVPVIIGRTPELGITDKLCSRSQLELTSNCYKRYVLVKRLGANTSQINGIDIEKNKSSRLEEGQDLHVVNGKFPHRVYFTGCQNDTKTEKAVVPKLPTKSTDLTKSDLSIKQPERKKLKVSENKSKVLNSKIKPQEKFSSESVYAFDSPSPMSSRCEKKAESNKRAPTHKHWSQGLKASMEDPELVVKEDEQIVVIKDKYPKAKYHWLILPKDSISSTKNLSTDNIELLKHILKVGQELAAEVKDKQPDVEFRFGYHAVASMSQMHMHVISQDFQSSSFKTKKHWNSFTTDYFVDATDIINELETGGKVKDRRTMTSLLNEPLKCHRCKKPQKNIPTLKKHIDSCQK</sequence>